<sequence length="293" mass="29949">MELMRARAPAKINLTLRIEGRRADGFHDLASLVAFAGAGDLVFLHPDAPLALEVCGPTAAAAGPDDDNLVLRAARAFAERVPGARLGRFVLEKRLPVAAGLGGGSSDAAAALRLLAGLNGLALDDPRLFAAARATGSDVPVCLDPRARLMRGVGDVLSAPLALPPLSAVLVNCRVAVPTAGVFRALGLAPGAALAGPEHPAGLPETTMGNAAAVCAFLSGLPNDLEPPALALAPEIGRAMALLSEAPEARLVRMSGSGATVFALTDSCRTAASLARRLLAQQPGWWVKPTLLR</sequence>
<proteinExistence type="inferred from homology"/>
<dbReference type="EC" id="2.7.1.148" evidence="1"/>
<dbReference type="EMBL" id="CP000781">
    <property type="protein sequence ID" value="ABS66629.1"/>
    <property type="molecule type" value="Genomic_DNA"/>
</dbReference>
<dbReference type="SMR" id="A7IF36"/>
<dbReference type="STRING" id="78245.Xaut_1381"/>
<dbReference type="KEGG" id="xau:Xaut_1381"/>
<dbReference type="eggNOG" id="COG1947">
    <property type="taxonomic scope" value="Bacteria"/>
</dbReference>
<dbReference type="HOGENOM" id="CLU_053057_1_0_5"/>
<dbReference type="OrthoDB" id="9809438at2"/>
<dbReference type="PhylomeDB" id="A7IF36"/>
<dbReference type="UniPathway" id="UPA00056">
    <property type="reaction ID" value="UER00094"/>
</dbReference>
<dbReference type="Proteomes" id="UP000002417">
    <property type="component" value="Chromosome"/>
</dbReference>
<dbReference type="GO" id="GO:0050515">
    <property type="term" value="F:4-(cytidine 5'-diphospho)-2-C-methyl-D-erythritol kinase activity"/>
    <property type="evidence" value="ECO:0007669"/>
    <property type="project" value="UniProtKB-UniRule"/>
</dbReference>
<dbReference type="GO" id="GO:0005524">
    <property type="term" value="F:ATP binding"/>
    <property type="evidence" value="ECO:0007669"/>
    <property type="project" value="UniProtKB-UniRule"/>
</dbReference>
<dbReference type="GO" id="GO:0019288">
    <property type="term" value="P:isopentenyl diphosphate biosynthetic process, methylerythritol 4-phosphate pathway"/>
    <property type="evidence" value="ECO:0007669"/>
    <property type="project" value="UniProtKB-UniRule"/>
</dbReference>
<dbReference type="GO" id="GO:0016114">
    <property type="term" value="P:terpenoid biosynthetic process"/>
    <property type="evidence" value="ECO:0007669"/>
    <property type="project" value="InterPro"/>
</dbReference>
<dbReference type="Gene3D" id="3.30.230.10">
    <property type="match status" value="1"/>
</dbReference>
<dbReference type="Gene3D" id="3.30.70.890">
    <property type="entry name" value="GHMP kinase, C-terminal domain"/>
    <property type="match status" value="1"/>
</dbReference>
<dbReference type="HAMAP" id="MF_00061">
    <property type="entry name" value="IspE"/>
    <property type="match status" value="1"/>
</dbReference>
<dbReference type="InterPro" id="IPR013750">
    <property type="entry name" value="GHMP_kinase_C_dom"/>
</dbReference>
<dbReference type="InterPro" id="IPR036554">
    <property type="entry name" value="GHMP_kinase_C_sf"/>
</dbReference>
<dbReference type="InterPro" id="IPR006204">
    <property type="entry name" value="GHMP_kinase_N_dom"/>
</dbReference>
<dbReference type="InterPro" id="IPR004424">
    <property type="entry name" value="IspE"/>
</dbReference>
<dbReference type="InterPro" id="IPR020568">
    <property type="entry name" value="Ribosomal_Su5_D2-typ_SF"/>
</dbReference>
<dbReference type="InterPro" id="IPR014721">
    <property type="entry name" value="Ribsml_uS5_D2-typ_fold_subgr"/>
</dbReference>
<dbReference type="NCBIfam" id="NF011202">
    <property type="entry name" value="PRK14608.1"/>
    <property type="match status" value="1"/>
</dbReference>
<dbReference type="PANTHER" id="PTHR43527">
    <property type="entry name" value="4-DIPHOSPHOCYTIDYL-2-C-METHYL-D-ERYTHRITOL KINASE, CHLOROPLASTIC"/>
    <property type="match status" value="1"/>
</dbReference>
<dbReference type="PANTHER" id="PTHR43527:SF2">
    <property type="entry name" value="4-DIPHOSPHOCYTIDYL-2-C-METHYL-D-ERYTHRITOL KINASE, CHLOROPLASTIC"/>
    <property type="match status" value="1"/>
</dbReference>
<dbReference type="Pfam" id="PF08544">
    <property type="entry name" value="GHMP_kinases_C"/>
    <property type="match status" value="1"/>
</dbReference>
<dbReference type="Pfam" id="PF00288">
    <property type="entry name" value="GHMP_kinases_N"/>
    <property type="match status" value="1"/>
</dbReference>
<dbReference type="PIRSF" id="PIRSF010376">
    <property type="entry name" value="IspE"/>
    <property type="match status" value="1"/>
</dbReference>
<dbReference type="SUPFAM" id="SSF55060">
    <property type="entry name" value="GHMP Kinase, C-terminal domain"/>
    <property type="match status" value="1"/>
</dbReference>
<dbReference type="SUPFAM" id="SSF54211">
    <property type="entry name" value="Ribosomal protein S5 domain 2-like"/>
    <property type="match status" value="1"/>
</dbReference>
<organism>
    <name type="scientific">Xanthobacter autotrophicus (strain ATCC BAA-1158 / Py2)</name>
    <dbReference type="NCBI Taxonomy" id="78245"/>
    <lineage>
        <taxon>Bacteria</taxon>
        <taxon>Pseudomonadati</taxon>
        <taxon>Pseudomonadota</taxon>
        <taxon>Alphaproteobacteria</taxon>
        <taxon>Hyphomicrobiales</taxon>
        <taxon>Xanthobacteraceae</taxon>
        <taxon>Xanthobacter</taxon>
    </lineage>
</organism>
<accession>A7IF36</accession>
<keyword id="KW-0067">ATP-binding</keyword>
<keyword id="KW-0414">Isoprene biosynthesis</keyword>
<keyword id="KW-0418">Kinase</keyword>
<keyword id="KW-0547">Nucleotide-binding</keyword>
<keyword id="KW-1185">Reference proteome</keyword>
<keyword id="KW-0808">Transferase</keyword>
<name>ISPE_XANP2</name>
<gene>
    <name evidence="1" type="primary">ispE</name>
    <name type="ordered locus">Xaut_1381</name>
</gene>
<comment type="function">
    <text evidence="1">Catalyzes the phosphorylation of the position 2 hydroxy group of 4-diphosphocytidyl-2C-methyl-D-erythritol.</text>
</comment>
<comment type="catalytic activity">
    <reaction evidence="1">
        <text>4-CDP-2-C-methyl-D-erythritol + ATP = 4-CDP-2-C-methyl-D-erythritol 2-phosphate + ADP + H(+)</text>
        <dbReference type="Rhea" id="RHEA:18437"/>
        <dbReference type="ChEBI" id="CHEBI:15378"/>
        <dbReference type="ChEBI" id="CHEBI:30616"/>
        <dbReference type="ChEBI" id="CHEBI:57823"/>
        <dbReference type="ChEBI" id="CHEBI:57919"/>
        <dbReference type="ChEBI" id="CHEBI:456216"/>
        <dbReference type="EC" id="2.7.1.148"/>
    </reaction>
</comment>
<comment type="pathway">
    <text evidence="1">Isoprenoid biosynthesis; isopentenyl diphosphate biosynthesis via DXP pathway; isopentenyl diphosphate from 1-deoxy-D-xylulose 5-phosphate: step 3/6.</text>
</comment>
<comment type="similarity">
    <text evidence="1">Belongs to the GHMP kinase family. IspE subfamily.</text>
</comment>
<evidence type="ECO:0000255" key="1">
    <source>
        <dbReference type="HAMAP-Rule" id="MF_00061"/>
    </source>
</evidence>
<reference key="1">
    <citation type="submission" date="2007-07" db="EMBL/GenBank/DDBJ databases">
        <title>Complete sequence of chromosome of Xanthobacter autotrophicus Py2.</title>
        <authorList>
            <consortium name="US DOE Joint Genome Institute"/>
            <person name="Copeland A."/>
            <person name="Lucas S."/>
            <person name="Lapidus A."/>
            <person name="Barry K."/>
            <person name="Glavina del Rio T."/>
            <person name="Hammon N."/>
            <person name="Israni S."/>
            <person name="Dalin E."/>
            <person name="Tice H."/>
            <person name="Pitluck S."/>
            <person name="Sims D."/>
            <person name="Brettin T."/>
            <person name="Bruce D."/>
            <person name="Detter J.C."/>
            <person name="Han C."/>
            <person name="Tapia R."/>
            <person name="Brainard J."/>
            <person name="Schmutz J."/>
            <person name="Larimer F."/>
            <person name="Land M."/>
            <person name="Hauser L."/>
            <person name="Kyrpides N."/>
            <person name="Kim E."/>
            <person name="Ensigns S.A."/>
            <person name="Richardson P."/>
        </authorList>
    </citation>
    <scope>NUCLEOTIDE SEQUENCE [LARGE SCALE GENOMIC DNA]</scope>
    <source>
        <strain>ATCC BAA-1158 / Py2</strain>
    </source>
</reference>
<feature type="chain" id="PRO_1000092126" description="4-diphosphocytidyl-2-C-methyl-D-erythritol kinase">
    <location>
        <begin position="1"/>
        <end position="293"/>
    </location>
</feature>
<feature type="active site" evidence="1">
    <location>
        <position position="11"/>
    </location>
</feature>
<feature type="active site" evidence="1">
    <location>
        <position position="138"/>
    </location>
</feature>
<feature type="binding site" evidence="1">
    <location>
        <begin position="96"/>
        <end position="106"/>
    </location>
    <ligand>
        <name>ATP</name>
        <dbReference type="ChEBI" id="CHEBI:30616"/>
    </ligand>
</feature>
<protein>
    <recommendedName>
        <fullName evidence="1">4-diphosphocytidyl-2-C-methyl-D-erythritol kinase</fullName>
        <shortName evidence="1">CMK</shortName>
        <ecNumber evidence="1">2.7.1.148</ecNumber>
    </recommendedName>
    <alternativeName>
        <fullName evidence="1">4-(cytidine-5'-diphospho)-2-C-methyl-D-erythritol kinase</fullName>
    </alternativeName>
</protein>